<name>NRDI_STRP1</name>
<gene>
    <name evidence="1" type="primary">nrdI</name>
    <name type="ordered locus">SPy_0426</name>
    <name type="ordered locus">M5005_Spy0348</name>
</gene>
<sequence>MAELIIVYFSSKSNNTHRFVQKLGLPAQRIPVDNRPLEVSTHYLLIVPTYAAGGSDAKGAVSKQVIRFLNNPNNRKHCKGVISSGNTNFGDTFALAGPIISQKLQVPLLHQFELLGTATDVKKVQAIFARLKHHTHDKQKQTNNLITERTHPCHKPMRHTSH</sequence>
<reference key="1">
    <citation type="journal article" date="2001" name="Proc. Natl. Acad. Sci. U.S.A.">
        <title>Complete genome sequence of an M1 strain of Streptococcus pyogenes.</title>
        <authorList>
            <person name="Ferretti J.J."/>
            <person name="McShan W.M."/>
            <person name="Ajdic D.J."/>
            <person name="Savic D.J."/>
            <person name="Savic G."/>
            <person name="Lyon K."/>
            <person name="Primeaux C."/>
            <person name="Sezate S."/>
            <person name="Suvorov A.N."/>
            <person name="Kenton S."/>
            <person name="Lai H.S."/>
            <person name="Lin S.P."/>
            <person name="Qian Y."/>
            <person name="Jia H.G."/>
            <person name="Najar F.Z."/>
            <person name="Ren Q."/>
            <person name="Zhu H."/>
            <person name="Song L."/>
            <person name="White J."/>
            <person name="Yuan X."/>
            <person name="Clifton S.W."/>
            <person name="Roe B.A."/>
            <person name="McLaughlin R.E."/>
        </authorList>
    </citation>
    <scope>NUCLEOTIDE SEQUENCE [LARGE SCALE GENOMIC DNA]</scope>
    <source>
        <strain>ATCC 700294 / SF370 / Serotype M1</strain>
    </source>
</reference>
<reference key="2">
    <citation type="journal article" date="2005" name="J. Infect. Dis.">
        <title>Evolutionary origin and emergence of a highly successful clone of serotype M1 group A Streptococcus involved multiple horizontal gene transfer events.</title>
        <authorList>
            <person name="Sumby P."/>
            <person name="Porcella S.F."/>
            <person name="Madrigal A.G."/>
            <person name="Barbian K.D."/>
            <person name="Virtaneva K."/>
            <person name="Ricklefs S.M."/>
            <person name="Sturdevant D.E."/>
            <person name="Graham M.R."/>
            <person name="Vuopio-Varkila J."/>
            <person name="Hoe N.P."/>
            <person name="Musser J.M."/>
        </authorList>
    </citation>
    <scope>NUCLEOTIDE SEQUENCE [LARGE SCALE GENOMIC DNA]</scope>
    <source>
        <strain>ATCC BAA-947 / MGAS5005 / Serotype M1</strain>
    </source>
</reference>
<feature type="chain" id="PRO_0000164343" description="Protein NrdI">
    <location>
        <begin position="1"/>
        <end position="162"/>
    </location>
</feature>
<protein>
    <recommendedName>
        <fullName evidence="1">Protein NrdI</fullName>
    </recommendedName>
</protein>
<evidence type="ECO:0000255" key="1">
    <source>
        <dbReference type="HAMAP-Rule" id="MF_00128"/>
    </source>
</evidence>
<keyword id="KW-1185">Reference proteome</keyword>
<dbReference type="EMBL" id="AE004092">
    <property type="protein sequence ID" value="AAK33448.1"/>
    <property type="molecule type" value="Genomic_DNA"/>
</dbReference>
<dbReference type="EMBL" id="CP000017">
    <property type="protein sequence ID" value="AAZ50966.1"/>
    <property type="molecule type" value="Genomic_DNA"/>
</dbReference>
<dbReference type="RefSeq" id="NP_268727.1">
    <property type="nucleotide sequence ID" value="NC_002737.2"/>
</dbReference>
<dbReference type="SMR" id="Q9A176"/>
<dbReference type="PaxDb" id="1314-HKU360_00382"/>
<dbReference type="KEGG" id="spy:SPy_0426"/>
<dbReference type="KEGG" id="spz:M5005_Spy0348"/>
<dbReference type="PATRIC" id="fig|160490.10.peg.360"/>
<dbReference type="HOGENOM" id="CLU_114845_0_0_9"/>
<dbReference type="OMA" id="NTHRFVG"/>
<dbReference type="Proteomes" id="UP000000750">
    <property type="component" value="Chromosome"/>
</dbReference>
<dbReference type="GO" id="GO:0010181">
    <property type="term" value="F:FMN binding"/>
    <property type="evidence" value="ECO:0007669"/>
    <property type="project" value="InterPro"/>
</dbReference>
<dbReference type="GO" id="GO:0036211">
    <property type="term" value="P:protein modification process"/>
    <property type="evidence" value="ECO:0007669"/>
    <property type="project" value="InterPro"/>
</dbReference>
<dbReference type="Gene3D" id="3.40.50.360">
    <property type="match status" value="1"/>
</dbReference>
<dbReference type="HAMAP" id="MF_00128">
    <property type="entry name" value="NrdI"/>
    <property type="match status" value="1"/>
</dbReference>
<dbReference type="InterPro" id="IPR029039">
    <property type="entry name" value="Flavoprotein-like_sf"/>
</dbReference>
<dbReference type="InterPro" id="IPR020852">
    <property type="entry name" value="RNR_Ib_NrdI_bac"/>
</dbReference>
<dbReference type="InterPro" id="IPR004465">
    <property type="entry name" value="RNR_NrdI"/>
</dbReference>
<dbReference type="NCBIfam" id="TIGR00333">
    <property type="entry name" value="nrdI"/>
    <property type="match status" value="1"/>
</dbReference>
<dbReference type="PANTHER" id="PTHR37297">
    <property type="entry name" value="PROTEIN NRDI"/>
    <property type="match status" value="1"/>
</dbReference>
<dbReference type="PANTHER" id="PTHR37297:SF1">
    <property type="entry name" value="PROTEIN NRDI"/>
    <property type="match status" value="1"/>
</dbReference>
<dbReference type="Pfam" id="PF07972">
    <property type="entry name" value="Flavodoxin_NdrI"/>
    <property type="match status" value="1"/>
</dbReference>
<dbReference type="PIRSF" id="PIRSF005087">
    <property type="entry name" value="NrdI"/>
    <property type="match status" value="1"/>
</dbReference>
<dbReference type="SUPFAM" id="SSF52218">
    <property type="entry name" value="Flavoproteins"/>
    <property type="match status" value="1"/>
</dbReference>
<proteinExistence type="inferred from homology"/>
<comment type="function">
    <text evidence="1">Probably involved in ribonucleotide reductase function.</text>
</comment>
<comment type="similarity">
    <text evidence="1">Belongs to the NrdI family.</text>
</comment>
<accession>Q9A176</accession>
<accession>Q490K2</accession>
<organism>
    <name type="scientific">Streptococcus pyogenes serotype M1</name>
    <dbReference type="NCBI Taxonomy" id="301447"/>
    <lineage>
        <taxon>Bacteria</taxon>
        <taxon>Bacillati</taxon>
        <taxon>Bacillota</taxon>
        <taxon>Bacilli</taxon>
        <taxon>Lactobacillales</taxon>
        <taxon>Streptococcaceae</taxon>
        <taxon>Streptococcus</taxon>
    </lineage>
</organism>